<protein>
    <recommendedName>
        <fullName evidence="1">Elongation factor Ts</fullName>
        <shortName evidence="1">EF-Ts</shortName>
    </recommendedName>
</protein>
<organism>
    <name type="scientific">Rhizobium etli (strain ATCC 51251 / DSM 11541 / JCM 21823 / NBRC 15573 / CFN 42)</name>
    <dbReference type="NCBI Taxonomy" id="347834"/>
    <lineage>
        <taxon>Bacteria</taxon>
        <taxon>Pseudomonadati</taxon>
        <taxon>Pseudomonadota</taxon>
        <taxon>Alphaproteobacteria</taxon>
        <taxon>Hyphomicrobiales</taxon>
        <taxon>Rhizobiaceae</taxon>
        <taxon>Rhizobium/Agrobacterium group</taxon>
        <taxon>Rhizobium</taxon>
    </lineage>
</organism>
<proteinExistence type="inferred from homology"/>
<accession>Q2K8Y6</accession>
<evidence type="ECO:0000255" key="1">
    <source>
        <dbReference type="HAMAP-Rule" id="MF_00050"/>
    </source>
</evidence>
<sequence>MSEITAAMVKELREKTGAGMMDCKKALAETSGDMEAAIDWLRAKGIAKADKKSGRTAAEGLVGVSSEGTKAVVVEVNSETDFVARNDAFQDLVRGIAKVAVSTNGTVEAVAAATYPASGKSVSDTIKDAIATIGENMNLRRSIALSVEDGVVATYIHNAVSDGLGKLGVLVALKSTGDKEALNAIGRQVAMHIAATAPLAIRPEEVDAAVAERERNVFIEQSRASGKPDNIIEKMVEGRMRKFFEEVALLSQSFVINPDLTVAAAIKEAEKAVGAPIEVAGMARLLLGEGVEKEETDFAAEVAAAVKG</sequence>
<comment type="function">
    <text evidence="1">Associates with the EF-Tu.GDP complex and induces the exchange of GDP to GTP. It remains bound to the aminoacyl-tRNA.EF-Tu.GTP complex up to the GTP hydrolysis stage on the ribosome.</text>
</comment>
<comment type="subcellular location">
    <subcellularLocation>
        <location evidence="1">Cytoplasm</location>
    </subcellularLocation>
</comment>
<comment type="similarity">
    <text evidence="1">Belongs to the EF-Ts family.</text>
</comment>
<keyword id="KW-0963">Cytoplasm</keyword>
<keyword id="KW-0251">Elongation factor</keyword>
<keyword id="KW-0648">Protein biosynthesis</keyword>
<keyword id="KW-1185">Reference proteome</keyword>
<reference key="1">
    <citation type="journal article" date="2006" name="Proc. Natl. Acad. Sci. U.S.A.">
        <title>The partitioned Rhizobium etli genome: genetic and metabolic redundancy in seven interacting replicons.</title>
        <authorList>
            <person name="Gonzalez V."/>
            <person name="Santamaria R.I."/>
            <person name="Bustos P."/>
            <person name="Hernandez-Gonzalez I."/>
            <person name="Medrano-Soto A."/>
            <person name="Moreno-Hagelsieb G."/>
            <person name="Janga S.C."/>
            <person name="Ramirez M.A."/>
            <person name="Jimenez-Jacinto V."/>
            <person name="Collado-Vides J."/>
            <person name="Davila G."/>
        </authorList>
    </citation>
    <scope>NUCLEOTIDE SEQUENCE [LARGE SCALE GENOMIC DNA]</scope>
    <source>
        <strain>ATCC 51251 / DSM 11541 / JCM 21823 / NBRC 15573 / CFN 42</strain>
    </source>
</reference>
<name>EFTS_RHIEC</name>
<gene>
    <name evidence="1" type="primary">tsf</name>
    <name type="ordered locus">RHE_CH01914</name>
</gene>
<feature type="chain" id="PRO_0000241515" description="Elongation factor Ts">
    <location>
        <begin position="1"/>
        <end position="308"/>
    </location>
</feature>
<feature type="region of interest" description="Involved in Mg(2+) ion dislocation from EF-Tu" evidence="1">
    <location>
        <begin position="80"/>
        <end position="83"/>
    </location>
</feature>
<dbReference type="EMBL" id="CP000133">
    <property type="protein sequence ID" value="ABC90700.1"/>
    <property type="molecule type" value="Genomic_DNA"/>
</dbReference>
<dbReference type="RefSeq" id="WP_011425193.1">
    <property type="nucleotide sequence ID" value="NC_007761.1"/>
</dbReference>
<dbReference type="SMR" id="Q2K8Y6"/>
<dbReference type="KEGG" id="ret:RHE_CH01914"/>
<dbReference type="eggNOG" id="COG0264">
    <property type="taxonomic scope" value="Bacteria"/>
</dbReference>
<dbReference type="HOGENOM" id="CLU_047155_2_0_5"/>
<dbReference type="OrthoDB" id="9808348at2"/>
<dbReference type="Proteomes" id="UP000001936">
    <property type="component" value="Chromosome"/>
</dbReference>
<dbReference type="GO" id="GO:0005737">
    <property type="term" value="C:cytoplasm"/>
    <property type="evidence" value="ECO:0007669"/>
    <property type="project" value="UniProtKB-SubCell"/>
</dbReference>
<dbReference type="GO" id="GO:0003746">
    <property type="term" value="F:translation elongation factor activity"/>
    <property type="evidence" value="ECO:0007669"/>
    <property type="project" value="UniProtKB-UniRule"/>
</dbReference>
<dbReference type="CDD" id="cd14275">
    <property type="entry name" value="UBA_EF-Ts"/>
    <property type="match status" value="1"/>
</dbReference>
<dbReference type="FunFam" id="1.10.286.20:FF:000001">
    <property type="entry name" value="Elongation factor Ts"/>
    <property type="match status" value="1"/>
</dbReference>
<dbReference type="FunFam" id="1.10.8.10:FF:000001">
    <property type="entry name" value="Elongation factor Ts"/>
    <property type="match status" value="1"/>
</dbReference>
<dbReference type="Gene3D" id="1.10.286.20">
    <property type="match status" value="1"/>
</dbReference>
<dbReference type="Gene3D" id="1.10.8.10">
    <property type="entry name" value="DNA helicase RuvA subunit, C-terminal domain"/>
    <property type="match status" value="1"/>
</dbReference>
<dbReference type="Gene3D" id="3.30.479.20">
    <property type="entry name" value="Elongation factor Ts, dimerisation domain"/>
    <property type="match status" value="2"/>
</dbReference>
<dbReference type="HAMAP" id="MF_00050">
    <property type="entry name" value="EF_Ts"/>
    <property type="match status" value="1"/>
</dbReference>
<dbReference type="InterPro" id="IPR036402">
    <property type="entry name" value="EF-Ts_dimer_sf"/>
</dbReference>
<dbReference type="InterPro" id="IPR001816">
    <property type="entry name" value="Transl_elong_EFTs/EF1B"/>
</dbReference>
<dbReference type="InterPro" id="IPR014039">
    <property type="entry name" value="Transl_elong_EFTs/EF1B_dimer"/>
</dbReference>
<dbReference type="InterPro" id="IPR018101">
    <property type="entry name" value="Transl_elong_Ts_CS"/>
</dbReference>
<dbReference type="InterPro" id="IPR009060">
    <property type="entry name" value="UBA-like_sf"/>
</dbReference>
<dbReference type="NCBIfam" id="TIGR00116">
    <property type="entry name" value="tsf"/>
    <property type="match status" value="1"/>
</dbReference>
<dbReference type="PANTHER" id="PTHR11741">
    <property type="entry name" value="ELONGATION FACTOR TS"/>
    <property type="match status" value="1"/>
</dbReference>
<dbReference type="PANTHER" id="PTHR11741:SF0">
    <property type="entry name" value="ELONGATION FACTOR TS, MITOCHONDRIAL"/>
    <property type="match status" value="1"/>
</dbReference>
<dbReference type="Pfam" id="PF00889">
    <property type="entry name" value="EF_TS"/>
    <property type="match status" value="1"/>
</dbReference>
<dbReference type="SUPFAM" id="SSF54713">
    <property type="entry name" value="Elongation factor Ts (EF-Ts), dimerisation domain"/>
    <property type="match status" value="1"/>
</dbReference>
<dbReference type="SUPFAM" id="SSF46934">
    <property type="entry name" value="UBA-like"/>
    <property type="match status" value="1"/>
</dbReference>
<dbReference type="PROSITE" id="PS01126">
    <property type="entry name" value="EF_TS_1"/>
    <property type="match status" value="1"/>
</dbReference>
<dbReference type="PROSITE" id="PS01127">
    <property type="entry name" value="EF_TS_2"/>
    <property type="match status" value="1"/>
</dbReference>